<evidence type="ECO:0000255" key="1">
    <source>
        <dbReference type="HAMAP-Rule" id="MF_00607"/>
    </source>
</evidence>
<proteinExistence type="inferred from homology"/>
<dbReference type="EC" id="2.1.1.182" evidence="1"/>
<dbReference type="EMBL" id="AM236080">
    <property type="protein sequence ID" value="CAK07059.1"/>
    <property type="molecule type" value="Genomic_DNA"/>
</dbReference>
<dbReference type="RefSeq" id="WP_011651249.1">
    <property type="nucleotide sequence ID" value="NC_008380.1"/>
</dbReference>
<dbReference type="SMR" id="Q1MJ01"/>
<dbReference type="EnsemblBacteria" id="CAK07059">
    <property type="protein sequence ID" value="CAK07059"/>
    <property type="gene ID" value="RL1564"/>
</dbReference>
<dbReference type="KEGG" id="rle:RL1564"/>
<dbReference type="eggNOG" id="COG0030">
    <property type="taxonomic scope" value="Bacteria"/>
</dbReference>
<dbReference type="HOGENOM" id="CLU_041220_0_1_5"/>
<dbReference type="Proteomes" id="UP000006575">
    <property type="component" value="Chromosome"/>
</dbReference>
<dbReference type="GO" id="GO:0005829">
    <property type="term" value="C:cytosol"/>
    <property type="evidence" value="ECO:0007669"/>
    <property type="project" value="TreeGrafter"/>
</dbReference>
<dbReference type="GO" id="GO:0052908">
    <property type="term" value="F:16S rRNA (adenine(1518)-N(6)/adenine(1519)-N(6))-dimethyltransferase activity"/>
    <property type="evidence" value="ECO:0007669"/>
    <property type="project" value="UniProtKB-EC"/>
</dbReference>
<dbReference type="GO" id="GO:0003723">
    <property type="term" value="F:RNA binding"/>
    <property type="evidence" value="ECO:0007669"/>
    <property type="project" value="UniProtKB-KW"/>
</dbReference>
<dbReference type="CDD" id="cd02440">
    <property type="entry name" value="AdoMet_MTases"/>
    <property type="match status" value="1"/>
</dbReference>
<dbReference type="FunFam" id="1.10.8.100:FF:000001">
    <property type="entry name" value="Ribosomal RNA small subunit methyltransferase A"/>
    <property type="match status" value="1"/>
</dbReference>
<dbReference type="Gene3D" id="1.10.8.100">
    <property type="entry name" value="Ribosomal RNA adenine dimethylase-like, domain 2"/>
    <property type="match status" value="1"/>
</dbReference>
<dbReference type="Gene3D" id="3.40.50.150">
    <property type="entry name" value="Vaccinia Virus protein VP39"/>
    <property type="match status" value="1"/>
</dbReference>
<dbReference type="HAMAP" id="MF_00607">
    <property type="entry name" value="16SrRNA_methyltr_A"/>
    <property type="match status" value="1"/>
</dbReference>
<dbReference type="InterPro" id="IPR001737">
    <property type="entry name" value="KsgA/Erm"/>
</dbReference>
<dbReference type="InterPro" id="IPR023165">
    <property type="entry name" value="rRNA_Ade_diMease-like_C"/>
</dbReference>
<dbReference type="InterPro" id="IPR020596">
    <property type="entry name" value="rRNA_Ade_Mease_Trfase_CS"/>
</dbReference>
<dbReference type="InterPro" id="IPR020598">
    <property type="entry name" value="rRNA_Ade_methylase_Trfase_N"/>
</dbReference>
<dbReference type="InterPro" id="IPR011530">
    <property type="entry name" value="rRNA_adenine_dimethylase"/>
</dbReference>
<dbReference type="InterPro" id="IPR029063">
    <property type="entry name" value="SAM-dependent_MTases_sf"/>
</dbReference>
<dbReference type="NCBIfam" id="TIGR00755">
    <property type="entry name" value="ksgA"/>
    <property type="match status" value="1"/>
</dbReference>
<dbReference type="PANTHER" id="PTHR11727">
    <property type="entry name" value="DIMETHYLADENOSINE TRANSFERASE"/>
    <property type="match status" value="1"/>
</dbReference>
<dbReference type="PANTHER" id="PTHR11727:SF7">
    <property type="entry name" value="DIMETHYLADENOSINE TRANSFERASE-RELATED"/>
    <property type="match status" value="1"/>
</dbReference>
<dbReference type="Pfam" id="PF00398">
    <property type="entry name" value="RrnaAD"/>
    <property type="match status" value="1"/>
</dbReference>
<dbReference type="SMART" id="SM00650">
    <property type="entry name" value="rADc"/>
    <property type="match status" value="1"/>
</dbReference>
<dbReference type="SUPFAM" id="SSF53335">
    <property type="entry name" value="S-adenosyl-L-methionine-dependent methyltransferases"/>
    <property type="match status" value="1"/>
</dbReference>
<dbReference type="PROSITE" id="PS01131">
    <property type="entry name" value="RRNA_A_DIMETH"/>
    <property type="match status" value="1"/>
</dbReference>
<dbReference type="PROSITE" id="PS51689">
    <property type="entry name" value="SAM_RNA_A_N6_MT"/>
    <property type="match status" value="1"/>
</dbReference>
<protein>
    <recommendedName>
        <fullName evidence="1">Ribosomal RNA small subunit methyltransferase A</fullName>
        <ecNumber evidence="1">2.1.1.182</ecNumber>
    </recommendedName>
    <alternativeName>
        <fullName evidence="1">16S rRNA (adenine(1518)-N(6)/adenine(1519)-N(6))-dimethyltransferase</fullName>
    </alternativeName>
    <alternativeName>
        <fullName evidence="1">16S rRNA dimethyladenosine transferase</fullName>
    </alternativeName>
    <alternativeName>
        <fullName evidence="1">16S rRNA dimethylase</fullName>
    </alternativeName>
    <alternativeName>
        <fullName evidence="1">S-adenosylmethionine-6-N', N'-adenosyl(rRNA) dimethyltransferase</fullName>
    </alternativeName>
</protein>
<organism>
    <name type="scientific">Rhizobium johnstonii (strain DSM 114642 / LMG 32736 / 3841)</name>
    <name type="common">Rhizobium leguminosarum bv. viciae</name>
    <dbReference type="NCBI Taxonomy" id="216596"/>
    <lineage>
        <taxon>Bacteria</taxon>
        <taxon>Pseudomonadati</taxon>
        <taxon>Pseudomonadota</taxon>
        <taxon>Alphaproteobacteria</taxon>
        <taxon>Hyphomicrobiales</taxon>
        <taxon>Rhizobiaceae</taxon>
        <taxon>Rhizobium/Agrobacterium group</taxon>
        <taxon>Rhizobium</taxon>
        <taxon>Rhizobium johnstonii</taxon>
    </lineage>
</organism>
<name>RSMA_RHIJ3</name>
<gene>
    <name evidence="1" type="primary">rsmA</name>
    <name evidence="1" type="synonym">ksgA</name>
    <name type="ordered locus">RL1564</name>
</gene>
<accession>Q1MJ01</accession>
<keyword id="KW-0963">Cytoplasm</keyword>
<keyword id="KW-0489">Methyltransferase</keyword>
<keyword id="KW-0694">RNA-binding</keyword>
<keyword id="KW-0698">rRNA processing</keyword>
<keyword id="KW-0949">S-adenosyl-L-methionine</keyword>
<keyword id="KW-0808">Transferase</keyword>
<feature type="chain" id="PRO_0000257331" description="Ribosomal RNA small subunit methyltransferase A">
    <location>
        <begin position="1"/>
        <end position="275"/>
    </location>
</feature>
<feature type="binding site" evidence="1">
    <location>
        <position position="28"/>
    </location>
    <ligand>
        <name>S-adenosyl-L-methionine</name>
        <dbReference type="ChEBI" id="CHEBI:59789"/>
    </ligand>
</feature>
<feature type="binding site" evidence="1">
    <location>
        <position position="30"/>
    </location>
    <ligand>
        <name>S-adenosyl-L-methionine</name>
        <dbReference type="ChEBI" id="CHEBI:59789"/>
    </ligand>
</feature>
<feature type="binding site" evidence="1">
    <location>
        <position position="55"/>
    </location>
    <ligand>
        <name>S-adenosyl-L-methionine</name>
        <dbReference type="ChEBI" id="CHEBI:59789"/>
    </ligand>
</feature>
<feature type="binding site" evidence="1">
    <location>
        <position position="77"/>
    </location>
    <ligand>
        <name>S-adenosyl-L-methionine</name>
        <dbReference type="ChEBI" id="CHEBI:59789"/>
    </ligand>
</feature>
<feature type="binding site" evidence="1">
    <location>
        <position position="103"/>
    </location>
    <ligand>
        <name>S-adenosyl-L-methionine</name>
        <dbReference type="ChEBI" id="CHEBI:59789"/>
    </ligand>
</feature>
<feature type="binding site" evidence="1">
    <location>
        <position position="123"/>
    </location>
    <ligand>
        <name>S-adenosyl-L-methionine</name>
        <dbReference type="ChEBI" id="CHEBI:59789"/>
    </ligand>
</feature>
<reference key="1">
    <citation type="journal article" date="2006" name="Genome Biol.">
        <title>The genome of Rhizobium leguminosarum has recognizable core and accessory components.</title>
        <authorList>
            <person name="Young J.P.W."/>
            <person name="Crossman L.C."/>
            <person name="Johnston A.W.B."/>
            <person name="Thomson N.R."/>
            <person name="Ghazoui Z.F."/>
            <person name="Hull K.H."/>
            <person name="Wexler M."/>
            <person name="Curson A.R.J."/>
            <person name="Todd J.D."/>
            <person name="Poole P.S."/>
            <person name="Mauchline T.H."/>
            <person name="East A.K."/>
            <person name="Quail M.A."/>
            <person name="Churcher C."/>
            <person name="Arrowsmith C."/>
            <person name="Cherevach I."/>
            <person name="Chillingworth T."/>
            <person name="Clarke K."/>
            <person name="Cronin A."/>
            <person name="Davis P."/>
            <person name="Fraser A."/>
            <person name="Hance Z."/>
            <person name="Hauser H."/>
            <person name="Jagels K."/>
            <person name="Moule S."/>
            <person name="Mungall K."/>
            <person name="Norbertczak H."/>
            <person name="Rabbinowitsch E."/>
            <person name="Sanders M."/>
            <person name="Simmonds M."/>
            <person name="Whitehead S."/>
            <person name="Parkhill J."/>
        </authorList>
    </citation>
    <scope>NUCLEOTIDE SEQUENCE [LARGE SCALE GENOMIC DNA]</scope>
    <source>
        <strain>DSM 114642 / LMG 32736 / 3841</strain>
    </source>
</reference>
<comment type="function">
    <text evidence="1">Specifically dimethylates two adjacent adenosines (A1518 and A1519) in the loop of a conserved hairpin near the 3'-end of 16S rRNA in the 30S particle. May play a critical role in biogenesis of 30S subunits.</text>
</comment>
<comment type="catalytic activity">
    <reaction evidence="1">
        <text>adenosine(1518)/adenosine(1519) in 16S rRNA + 4 S-adenosyl-L-methionine = N(6)-dimethyladenosine(1518)/N(6)-dimethyladenosine(1519) in 16S rRNA + 4 S-adenosyl-L-homocysteine + 4 H(+)</text>
        <dbReference type="Rhea" id="RHEA:19609"/>
        <dbReference type="Rhea" id="RHEA-COMP:10232"/>
        <dbReference type="Rhea" id="RHEA-COMP:10233"/>
        <dbReference type="ChEBI" id="CHEBI:15378"/>
        <dbReference type="ChEBI" id="CHEBI:57856"/>
        <dbReference type="ChEBI" id="CHEBI:59789"/>
        <dbReference type="ChEBI" id="CHEBI:74411"/>
        <dbReference type="ChEBI" id="CHEBI:74493"/>
        <dbReference type="EC" id="2.1.1.182"/>
    </reaction>
</comment>
<comment type="subcellular location">
    <subcellularLocation>
        <location evidence="1">Cytoplasm</location>
    </subcellularLocation>
</comment>
<comment type="similarity">
    <text evidence="1">Belongs to the class I-like SAM-binding methyltransferase superfamily. rRNA adenine N(6)-methyltransferase family. RsmA subfamily.</text>
</comment>
<sequence length="275" mass="30120">MAALDGLPPLRDVIQRHGLDARKALGQNFLLDLNLTQKIARTAGALEDATVFEVGPGPGGLTRAILALGARKVIAIERDTRCLPALAEIADHYPGRLEVIEGDALKTDFETLAPQGPIKIIANLPYNVGTQLLVNWLLPKAWPPFWQSLTLMFQKEVGERIVANEDDDHYGRLGVLCGWRTEARMAFDVPPQAFTPPPKVTSTVVQLTPRENPIPCAVSNLEKVTQAAFGQRRKMLRQSLKPLGGERLLVKAGIDPARRAETLSVKEFCLLANSL</sequence>